<protein>
    <recommendedName>
        <fullName>Superoxide dismutase [Mn/Fe]</fullName>
        <ecNumber evidence="6">1.15.1.1</ecNumber>
    </recommendedName>
</protein>
<reference key="1">
    <citation type="journal article" date="1990" name="Gene">
        <title>The superoxide dismutase-encoding gene of the obligately anaerobic bacterium Bacteroides gingivalis.</title>
        <authorList>
            <person name="Nakayama K."/>
        </authorList>
    </citation>
    <scope>NUCLEOTIDE SEQUENCE [GENOMIC DNA]</scope>
</reference>
<reference key="2">
    <citation type="journal article" date="1991" name="Infect. Immun.">
        <title>Isolation, expression, and nucleotide sequence of the sod gene from Porphyromonas gingivalis.</title>
        <authorList>
            <person name="Choi J.I."/>
            <person name="Takahashi N."/>
            <person name="Kato T."/>
            <person name="Kuramitsu H.K."/>
        </authorList>
    </citation>
    <scope>NUCLEOTIDE SEQUENCE [GENOMIC DNA]</scope>
    <source>
        <strain>ATCC 53977</strain>
    </source>
</reference>
<reference key="3">
    <citation type="journal article" date="1990" name="FEBS Lett.">
        <title>The primary structure of superoxide dismutase purified from anaerobically maintained Bacteroides gingivalis.</title>
        <authorList>
            <person name="Amano A."/>
            <person name="Shizukuishi S."/>
            <person name="Tsunemitsu A."/>
            <person name="Maekawa K."/>
            <person name="Tsunasawa S."/>
        </authorList>
    </citation>
    <scope>PROTEIN SEQUENCE</scope>
    <source>
        <strain>381</strain>
    </source>
</reference>
<reference key="4">
    <citation type="journal article" date="2003" name="J. Bacteriol.">
        <title>Complete genome sequence of the oral pathogenic bacterium Porphyromonas gingivalis strain W83.</title>
        <authorList>
            <person name="Nelson K.E."/>
            <person name="Fleischmann R.D."/>
            <person name="DeBoy R.T."/>
            <person name="Paulsen I.T."/>
            <person name="Fouts D.E."/>
            <person name="Eisen J.A."/>
            <person name="Daugherty S.C."/>
            <person name="Dodson R.J."/>
            <person name="Durkin A.S."/>
            <person name="Gwinn M.L."/>
            <person name="Haft D.H."/>
            <person name="Kolonay J.F."/>
            <person name="Nelson W.C."/>
            <person name="Mason T.M."/>
            <person name="Tallon L."/>
            <person name="Gray J."/>
            <person name="Granger D."/>
            <person name="Tettelin H."/>
            <person name="Dong H."/>
            <person name="Galvin J.L."/>
            <person name="Duncan M.J."/>
            <person name="Dewhirst F.E."/>
            <person name="Fraser C.M."/>
        </authorList>
    </citation>
    <scope>NUCLEOTIDE SEQUENCE [LARGE SCALE GENOMIC DNA]</scope>
    <source>
        <strain>ATCC BAA-308 / W83</strain>
    </source>
</reference>
<reference key="5">
    <citation type="journal article" date="1990" name="J. Bacteriol.">
        <title>Characterization of superoxide dismutases purified from either anaerobically maintained or aerated Bacteroides gingivalis.</title>
        <authorList>
            <person name="Amano A."/>
            <person name="Shizukuishi S."/>
            <person name="Tamagawa H."/>
            <person name="Iwakura K."/>
            <person name="Tsunasawa S."/>
            <person name="Tsunemitsu A."/>
        </authorList>
    </citation>
    <scope>PROTEIN SEQUENCE OF 1-12</scope>
    <scope>CATALYTIC ACTIVITY</scope>
    <scope>COFACTOR</scope>
    <scope>ACTIVITY REGULATION</scope>
    <scope>SUBUNIT</scope>
    <source>
        <strain>381</strain>
    </source>
</reference>
<reference evidence="7" key="6">
    <citation type="journal article" date="2000" name="Eur. J. Biochem.">
        <title>Crystal structure of cambialistic superoxide dismutase from Porphyromonas gingivalis.</title>
        <authorList>
            <person name="Sugio S."/>
            <person name="Hiraoka B.Y."/>
            <person name="Yamakura F."/>
        </authorList>
    </citation>
    <scope>X-RAY CRYSTALLOGRAPHY (1.8 ANGSTROMS) IN COMPLEX WITH IRON</scope>
    <scope>COFACTOR</scope>
</reference>
<reference evidence="8 9" key="7">
    <citation type="journal article" date="2003" name="Biochemistry">
        <title>Pronounced conversion of the metal-specific activity of superoxide dismutase from Porphyromonas gingivalis by the mutation of a single amino acid (Gly155Thr) located apart from the active site.</title>
        <authorList>
            <person name="Yamakura F."/>
            <person name="Sugio S."/>
            <person name="Hiraoka B.Y."/>
            <person name="Ohmori D."/>
            <person name="Yokota T."/>
        </authorList>
    </citation>
    <scope>X-RAY CRYSTALLOGRAPHY (1.60 ANGSTROMS) OF WILD-TYPE AND MUTANT THR-155 IN COMPLEX WITH IRON OR MANGANESE</scope>
    <scope>COFACTOR</scope>
    <scope>MUTAGENESIS OF GLY-155</scope>
</reference>
<comment type="function">
    <text>Destroys superoxide anion radicals which are normally produced within the cells and which are toxic to biological systems. Catalyzes the dismutation of superoxide anion radicals into O2 and H2O2 by successive reduction and oxidation of the transition metal ion at the active site.</text>
</comment>
<comment type="catalytic activity">
    <reaction evidence="6">
        <text>2 superoxide + 2 H(+) = H2O2 + O2</text>
        <dbReference type="Rhea" id="RHEA:20696"/>
        <dbReference type="ChEBI" id="CHEBI:15378"/>
        <dbReference type="ChEBI" id="CHEBI:15379"/>
        <dbReference type="ChEBI" id="CHEBI:16240"/>
        <dbReference type="ChEBI" id="CHEBI:18421"/>
        <dbReference type="EC" id="1.15.1.1"/>
    </reaction>
    <physiologicalReaction direction="left-to-right" evidence="6">
        <dbReference type="Rhea" id="RHEA:20697"/>
    </physiologicalReaction>
</comment>
<comment type="cofactor">
    <cofactor evidence="1 3">
        <name>Mn(2+)</name>
        <dbReference type="ChEBI" id="CHEBI:29035"/>
    </cofactor>
    <cofactor evidence="1 2 3">
        <name>Fe(3+)</name>
        <dbReference type="ChEBI" id="CHEBI:29034"/>
    </cofactor>
    <text evidence="1 2">Binds 1 Mn(2+) or Fe(3+) ion per subunit.</text>
</comment>
<comment type="activity regulation">
    <text evidence="3">Inhibited by hydrogen peroxide.</text>
</comment>
<comment type="subunit">
    <text evidence="3">Homodimer.</text>
</comment>
<comment type="similarity">
    <text evidence="5">Belongs to the iron/manganese superoxide dismutase family.</text>
</comment>
<accession>P19665</accession>
<gene>
    <name type="primary">sodB</name>
    <name evidence="4" type="synonym">sod</name>
    <name type="ordered locus">PG_1545</name>
</gene>
<name>SODF_PORGI</name>
<organism>
    <name type="scientific">Porphyromonas gingivalis (strain ATCC BAA-308 / W83)</name>
    <dbReference type="NCBI Taxonomy" id="242619"/>
    <lineage>
        <taxon>Bacteria</taxon>
        <taxon>Pseudomonadati</taxon>
        <taxon>Bacteroidota</taxon>
        <taxon>Bacteroidia</taxon>
        <taxon>Bacteroidales</taxon>
        <taxon>Porphyromonadaceae</taxon>
        <taxon>Porphyromonas</taxon>
    </lineage>
</organism>
<keyword id="KW-0002">3D-structure</keyword>
<keyword id="KW-0903">Direct protein sequencing</keyword>
<keyword id="KW-0408">Iron</keyword>
<keyword id="KW-0464">Manganese</keyword>
<keyword id="KW-0479">Metal-binding</keyword>
<keyword id="KW-0560">Oxidoreductase</keyword>
<keyword id="KW-1185">Reference proteome</keyword>
<dbReference type="EC" id="1.15.1.1" evidence="6"/>
<dbReference type="EMBL" id="D90152">
    <property type="protein sequence ID" value="BAA14182.1"/>
    <property type="molecule type" value="Genomic_DNA"/>
</dbReference>
<dbReference type="EMBL" id="M60401">
    <property type="protein sequence ID" value="AAA25651.1"/>
    <property type="molecule type" value="Genomic_DNA"/>
</dbReference>
<dbReference type="EMBL" id="AE015924">
    <property type="protein sequence ID" value="AAQ66583.1"/>
    <property type="molecule type" value="Genomic_DNA"/>
</dbReference>
<dbReference type="PIR" id="A43585">
    <property type="entry name" value="A43585"/>
</dbReference>
<dbReference type="RefSeq" id="WP_004585361.1">
    <property type="nucleotide sequence ID" value="NC_002950.2"/>
</dbReference>
<dbReference type="PDB" id="1QNN">
    <property type="method" value="X-ray"/>
    <property type="resolution" value="1.80 A"/>
    <property type="chains" value="A/B/C/D=1-191"/>
</dbReference>
<dbReference type="PDB" id="1UER">
    <property type="method" value="X-ray"/>
    <property type="resolution" value="1.60 A"/>
    <property type="chains" value="A/B/C/D=1-191"/>
</dbReference>
<dbReference type="PDB" id="1UES">
    <property type="method" value="X-ray"/>
    <property type="resolution" value="1.60 A"/>
    <property type="chains" value="A/B/C/D=1-191"/>
</dbReference>
<dbReference type="PDBsum" id="1QNN"/>
<dbReference type="PDBsum" id="1UER"/>
<dbReference type="PDBsum" id="1UES"/>
<dbReference type="SMR" id="P19665"/>
<dbReference type="STRING" id="242619.PG_1545"/>
<dbReference type="EnsemblBacteria" id="AAQ66583">
    <property type="protein sequence ID" value="AAQ66583"/>
    <property type="gene ID" value="PG_1545"/>
</dbReference>
<dbReference type="GeneID" id="29255789"/>
<dbReference type="KEGG" id="pgi:PG_1545"/>
<dbReference type="eggNOG" id="COG0605">
    <property type="taxonomic scope" value="Bacteria"/>
</dbReference>
<dbReference type="HOGENOM" id="CLU_031625_0_0_10"/>
<dbReference type="EvolutionaryTrace" id="P19665"/>
<dbReference type="Proteomes" id="UP000000588">
    <property type="component" value="Chromosome"/>
</dbReference>
<dbReference type="GO" id="GO:0046872">
    <property type="term" value="F:metal ion binding"/>
    <property type="evidence" value="ECO:0007669"/>
    <property type="project" value="UniProtKB-KW"/>
</dbReference>
<dbReference type="GO" id="GO:0004784">
    <property type="term" value="F:superoxide dismutase activity"/>
    <property type="evidence" value="ECO:0007669"/>
    <property type="project" value="UniProtKB-EC"/>
</dbReference>
<dbReference type="FunFam" id="3.55.40.20:FF:000001">
    <property type="entry name" value="Superoxide dismutase"/>
    <property type="match status" value="1"/>
</dbReference>
<dbReference type="Gene3D" id="1.10.287.990">
    <property type="entry name" value="Fe,Mn superoxide dismutase (SOD) domain"/>
    <property type="match status" value="1"/>
</dbReference>
<dbReference type="Gene3D" id="3.55.40.20">
    <property type="entry name" value="Iron/manganese superoxide dismutase, C-terminal domain"/>
    <property type="match status" value="1"/>
</dbReference>
<dbReference type="InterPro" id="IPR001189">
    <property type="entry name" value="Mn/Fe_SOD"/>
</dbReference>
<dbReference type="InterPro" id="IPR019833">
    <property type="entry name" value="Mn/Fe_SOD_BS"/>
</dbReference>
<dbReference type="InterPro" id="IPR019832">
    <property type="entry name" value="Mn/Fe_SOD_C"/>
</dbReference>
<dbReference type="InterPro" id="IPR019831">
    <property type="entry name" value="Mn/Fe_SOD_N"/>
</dbReference>
<dbReference type="InterPro" id="IPR036324">
    <property type="entry name" value="Mn/Fe_SOD_N_sf"/>
</dbReference>
<dbReference type="InterPro" id="IPR036314">
    <property type="entry name" value="SOD_C_sf"/>
</dbReference>
<dbReference type="PANTHER" id="PTHR42769">
    <property type="entry name" value="SUPEROXIDE DISMUTASE"/>
    <property type="match status" value="1"/>
</dbReference>
<dbReference type="PANTHER" id="PTHR42769:SF3">
    <property type="entry name" value="SUPEROXIDE DISMUTASE [FE] 2, CHLOROPLASTIC"/>
    <property type="match status" value="1"/>
</dbReference>
<dbReference type="Pfam" id="PF02777">
    <property type="entry name" value="Sod_Fe_C"/>
    <property type="match status" value="1"/>
</dbReference>
<dbReference type="Pfam" id="PF00081">
    <property type="entry name" value="Sod_Fe_N"/>
    <property type="match status" value="1"/>
</dbReference>
<dbReference type="PIRSF" id="PIRSF000349">
    <property type="entry name" value="SODismutase"/>
    <property type="match status" value="1"/>
</dbReference>
<dbReference type="PRINTS" id="PR01703">
    <property type="entry name" value="MNSODISMTASE"/>
</dbReference>
<dbReference type="SUPFAM" id="SSF54719">
    <property type="entry name" value="Fe,Mn superoxide dismutase (SOD), C-terminal domain"/>
    <property type="match status" value="1"/>
</dbReference>
<dbReference type="SUPFAM" id="SSF46609">
    <property type="entry name" value="Fe,Mn superoxide dismutase (SOD), N-terminal domain"/>
    <property type="match status" value="1"/>
</dbReference>
<dbReference type="PROSITE" id="PS00088">
    <property type="entry name" value="SOD_MN"/>
    <property type="match status" value="1"/>
</dbReference>
<feature type="chain" id="PRO_0000159993" description="Superoxide dismutase [Mn/Fe]">
    <location>
        <begin position="1"/>
        <end position="191"/>
    </location>
</feature>
<feature type="binding site" evidence="2 7 8">
    <location>
        <position position="27"/>
    </location>
    <ligand>
        <name>Fe(3+)</name>
        <dbReference type="ChEBI" id="CHEBI:29034"/>
    </ligand>
</feature>
<feature type="binding site" evidence="2 9">
    <location>
        <position position="27"/>
    </location>
    <ligand>
        <name>Mn(2+)</name>
        <dbReference type="ChEBI" id="CHEBI:29035"/>
    </ligand>
</feature>
<feature type="binding site" evidence="2 7 8">
    <location>
        <position position="74"/>
    </location>
    <ligand>
        <name>Fe(3+)</name>
        <dbReference type="ChEBI" id="CHEBI:29034"/>
    </ligand>
</feature>
<feature type="binding site" evidence="2 9">
    <location>
        <position position="74"/>
    </location>
    <ligand>
        <name>Mn(2+)</name>
        <dbReference type="ChEBI" id="CHEBI:29035"/>
    </ligand>
</feature>
<feature type="binding site" evidence="2 7 8">
    <location>
        <position position="157"/>
    </location>
    <ligand>
        <name>Fe(3+)</name>
        <dbReference type="ChEBI" id="CHEBI:29034"/>
    </ligand>
</feature>
<feature type="binding site" evidence="2 9">
    <location>
        <position position="157"/>
    </location>
    <ligand>
        <name>Mn(2+)</name>
        <dbReference type="ChEBI" id="CHEBI:29035"/>
    </ligand>
</feature>
<feature type="binding site" evidence="2 7 8">
    <location>
        <position position="161"/>
    </location>
    <ligand>
        <name>Fe(3+)</name>
        <dbReference type="ChEBI" id="CHEBI:29034"/>
    </ligand>
</feature>
<feature type="binding site" evidence="2 9">
    <location>
        <position position="161"/>
    </location>
    <ligand>
        <name>Mn(2+)</name>
        <dbReference type="ChEBI" id="CHEBI:29035"/>
    </ligand>
</feature>
<feature type="mutagenesis site" description="Converts the metal-specific activity of the enzyme from a cambialistic type (showing the same activity with Fe and Mn) to an Fe-specific type." evidence="2">
    <original>G</original>
    <variation>T</variation>
    <location>
        <position position="155"/>
    </location>
</feature>
<feature type="sequence conflict" description="In Ref. 2; AAA25651." evidence="5" ref="2">
    <original>D</original>
    <variation>Y</variation>
    <location>
        <position position="13"/>
    </location>
</feature>
<feature type="sequence conflict" description="In Ref. 3; AA sequence." evidence="5" ref="3">
    <original>G</original>
    <variation>E</variation>
    <location>
        <position position="29"/>
    </location>
</feature>
<feature type="sequence conflict" description="In Ref. 2; AAA25651." evidence="5" ref="2">
    <original>N</original>
    <variation>D</variation>
    <location>
        <position position="112"/>
    </location>
</feature>
<feature type="turn" evidence="10">
    <location>
        <begin position="12"/>
        <end position="19"/>
    </location>
</feature>
<feature type="helix" evidence="10">
    <location>
        <begin position="21"/>
        <end position="27"/>
    </location>
</feature>
<feature type="turn" evidence="10">
    <location>
        <begin position="28"/>
        <end position="30"/>
    </location>
</feature>
<feature type="helix" evidence="10">
    <location>
        <begin position="31"/>
        <end position="42"/>
    </location>
</feature>
<feature type="turn" evidence="10">
    <location>
        <begin position="43"/>
        <end position="45"/>
    </location>
</feature>
<feature type="turn" evidence="10">
    <location>
        <begin position="47"/>
        <end position="50"/>
    </location>
</feature>
<feature type="helix" evidence="10">
    <location>
        <begin position="53"/>
        <end position="59"/>
    </location>
</feature>
<feature type="helix" evidence="10">
    <location>
        <begin position="62"/>
        <end position="79"/>
    </location>
</feature>
<feature type="helix" evidence="10">
    <location>
        <begin position="91"/>
        <end position="101"/>
    </location>
</feature>
<feature type="helix" evidence="10">
    <location>
        <begin position="104"/>
        <end position="117"/>
    </location>
</feature>
<feature type="strand" evidence="10">
    <location>
        <begin position="120"/>
        <end position="128"/>
    </location>
</feature>
<feature type="strand" evidence="10">
    <location>
        <begin position="134"/>
        <end position="140"/>
    </location>
</feature>
<feature type="helix" evidence="10">
    <location>
        <begin position="145"/>
        <end position="148"/>
    </location>
</feature>
<feature type="strand" evidence="10">
    <location>
        <begin position="151"/>
        <end position="157"/>
    </location>
</feature>
<feature type="helix" evidence="10">
    <location>
        <begin position="160"/>
        <end position="162"/>
    </location>
</feature>
<feature type="helix" evidence="10">
    <location>
        <begin position="164"/>
        <end position="167"/>
    </location>
</feature>
<feature type="helix" evidence="10">
    <location>
        <begin position="171"/>
        <end position="178"/>
    </location>
</feature>
<feature type="helix" evidence="10">
    <location>
        <begin position="179"/>
        <end position="181"/>
    </location>
</feature>
<feature type="helix" evidence="10">
    <location>
        <begin position="184"/>
        <end position="190"/>
    </location>
</feature>
<sequence length="191" mass="21501">MTHELISLPYAVDALAPVISKETVEFHHGKHLKTYVDNLNKLIIGTEFENADLNTIVQKSEGGIFNNAGQTLNHNLYFTQFRPGKGGAPKGKLGEAIDKQFGSFEKFKEEFNTAGTTLFGSGWVWLASDANGKLSIEKEPNAGNPVRKGLNPLLGFDVWEHAYYLTYQNRRADHLKDLWSIVDWDIVESRY</sequence>
<evidence type="ECO:0000269" key="1">
    <source>
    </source>
</evidence>
<evidence type="ECO:0000269" key="2">
    <source>
    </source>
</evidence>
<evidence type="ECO:0000269" key="3">
    <source>
    </source>
</evidence>
<evidence type="ECO:0000303" key="4">
    <source>
    </source>
</evidence>
<evidence type="ECO:0000305" key="5"/>
<evidence type="ECO:0000305" key="6">
    <source>
    </source>
</evidence>
<evidence type="ECO:0007744" key="7">
    <source>
        <dbReference type="PDB" id="1QNN"/>
    </source>
</evidence>
<evidence type="ECO:0007744" key="8">
    <source>
        <dbReference type="PDB" id="1UER"/>
    </source>
</evidence>
<evidence type="ECO:0007744" key="9">
    <source>
        <dbReference type="PDB" id="1UES"/>
    </source>
</evidence>
<evidence type="ECO:0007829" key="10">
    <source>
        <dbReference type="PDB" id="1UER"/>
    </source>
</evidence>
<proteinExistence type="evidence at protein level"/>